<name>TRPD_STRMU</name>
<gene>
    <name evidence="1" type="primary">trpD</name>
    <name type="ordered locus">SMU_534</name>
</gene>
<evidence type="ECO:0000255" key="1">
    <source>
        <dbReference type="HAMAP-Rule" id="MF_00211"/>
    </source>
</evidence>
<comment type="function">
    <text evidence="1">Catalyzes the transfer of the phosphoribosyl group of 5-phosphorylribose-1-pyrophosphate (PRPP) to anthranilate to yield N-(5'-phosphoribosyl)-anthranilate (PRA).</text>
</comment>
<comment type="catalytic activity">
    <reaction evidence="1">
        <text>N-(5-phospho-beta-D-ribosyl)anthranilate + diphosphate = 5-phospho-alpha-D-ribose 1-diphosphate + anthranilate</text>
        <dbReference type="Rhea" id="RHEA:11768"/>
        <dbReference type="ChEBI" id="CHEBI:16567"/>
        <dbReference type="ChEBI" id="CHEBI:18277"/>
        <dbReference type="ChEBI" id="CHEBI:33019"/>
        <dbReference type="ChEBI" id="CHEBI:58017"/>
        <dbReference type="EC" id="2.4.2.18"/>
    </reaction>
</comment>
<comment type="cofactor">
    <cofactor evidence="1">
        <name>Mg(2+)</name>
        <dbReference type="ChEBI" id="CHEBI:18420"/>
    </cofactor>
    <text evidence="1">Binds 2 magnesium ions per monomer.</text>
</comment>
<comment type="pathway">
    <text evidence="1">Amino-acid biosynthesis; L-tryptophan biosynthesis; L-tryptophan from chorismate: step 2/5.</text>
</comment>
<comment type="subunit">
    <text evidence="1">Homodimer.</text>
</comment>
<comment type="similarity">
    <text evidence="1">Belongs to the anthranilate phosphoribosyltransferase family.</text>
</comment>
<proteinExistence type="inferred from homology"/>
<dbReference type="EC" id="2.4.2.18" evidence="1"/>
<dbReference type="EMBL" id="AE014133">
    <property type="protein sequence ID" value="AAN58277.1"/>
    <property type="molecule type" value="Genomic_DNA"/>
</dbReference>
<dbReference type="RefSeq" id="NP_720971.1">
    <property type="nucleotide sequence ID" value="NC_004350.2"/>
</dbReference>
<dbReference type="RefSeq" id="WP_002262053.1">
    <property type="nucleotide sequence ID" value="NC_004350.2"/>
</dbReference>
<dbReference type="SMR" id="Q8DVF6"/>
<dbReference type="STRING" id="210007.SMU_534"/>
<dbReference type="GeneID" id="93859894"/>
<dbReference type="KEGG" id="smu:SMU_534"/>
<dbReference type="PATRIC" id="fig|210007.7.peg.471"/>
<dbReference type="eggNOG" id="COG0547">
    <property type="taxonomic scope" value="Bacteria"/>
</dbReference>
<dbReference type="HOGENOM" id="CLU_034315_2_1_9"/>
<dbReference type="OrthoDB" id="9806430at2"/>
<dbReference type="PhylomeDB" id="Q8DVF6"/>
<dbReference type="UniPathway" id="UPA00035">
    <property type="reaction ID" value="UER00041"/>
</dbReference>
<dbReference type="Proteomes" id="UP000002512">
    <property type="component" value="Chromosome"/>
</dbReference>
<dbReference type="GO" id="GO:0005829">
    <property type="term" value="C:cytosol"/>
    <property type="evidence" value="ECO:0007669"/>
    <property type="project" value="TreeGrafter"/>
</dbReference>
<dbReference type="GO" id="GO:0004048">
    <property type="term" value="F:anthranilate phosphoribosyltransferase activity"/>
    <property type="evidence" value="ECO:0007669"/>
    <property type="project" value="UniProtKB-UniRule"/>
</dbReference>
<dbReference type="GO" id="GO:0000287">
    <property type="term" value="F:magnesium ion binding"/>
    <property type="evidence" value="ECO:0007669"/>
    <property type="project" value="UniProtKB-UniRule"/>
</dbReference>
<dbReference type="GO" id="GO:0000162">
    <property type="term" value="P:L-tryptophan biosynthetic process"/>
    <property type="evidence" value="ECO:0007669"/>
    <property type="project" value="UniProtKB-UniRule"/>
</dbReference>
<dbReference type="FunFam" id="3.40.1030.10:FF:000002">
    <property type="entry name" value="Anthranilate phosphoribosyltransferase"/>
    <property type="match status" value="1"/>
</dbReference>
<dbReference type="Gene3D" id="3.40.1030.10">
    <property type="entry name" value="Nucleoside phosphorylase/phosphoribosyltransferase catalytic domain"/>
    <property type="match status" value="1"/>
</dbReference>
<dbReference type="Gene3D" id="1.20.970.10">
    <property type="entry name" value="Transferase, Pyrimidine Nucleoside Phosphorylase, Chain C"/>
    <property type="match status" value="1"/>
</dbReference>
<dbReference type="HAMAP" id="MF_00211">
    <property type="entry name" value="TrpD"/>
    <property type="match status" value="1"/>
</dbReference>
<dbReference type="InterPro" id="IPR005940">
    <property type="entry name" value="Anthranilate_Pribosyl_Tfrase"/>
</dbReference>
<dbReference type="InterPro" id="IPR000312">
    <property type="entry name" value="Glycosyl_Trfase_fam3"/>
</dbReference>
<dbReference type="InterPro" id="IPR017459">
    <property type="entry name" value="Glycosyl_Trfase_fam3_N_dom"/>
</dbReference>
<dbReference type="InterPro" id="IPR036320">
    <property type="entry name" value="Glycosyl_Trfase_fam3_N_dom_sf"/>
</dbReference>
<dbReference type="InterPro" id="IPR035902">
    <property type="entry name" value="Nuc_phospho_transferase"/>
</dbReference>
<dbReference type="NCBIfam" id="TIGR01245">
    <property type="entry name" value="trpD"/>
    <property type="match status" value="1"/>
</dbReference>
<dbReference type="PANTHER" id="PTHR43285">
    <property type="entry name" value="ANTHRANILATE PHOSPHORIBOSYLTRANSFERASE"/>
    <property type="match status" value="1"/>
</dbReference>
<dbReference type="PANTHER" id="PTHR43285:SF2">
    <property type="entry name" value="ANTHRANILATE PHOSPHORIBOSYLTRANSFERASE"/>
    <property type="match status" value="1"/>
</dbReference>
<dbReference type="Pfam" id="PF02885">
    <property type="entry name" value="Glycos_trans_3N"/>
    <property type="match status" value="1"/>
</dbReference>
<dbReference type="Pfam" id="PF00591">
    <property type="entry name" value="Glycos_transf_3"/>
    <property type="match status" value="1"/>
</dbReference>
<dbReference type="SUPFAM" id="SSF52418">
    <property type="entry name" value="Nucleoside phosphorylase/phosphoribosyltransferase catalytic domain"/>
    <property type="match status" value="1"/>
</dbReference>
<dbReference type="SUPFAM" id="SSF47648">
    <property type="entry name" value="Nucleoside phosphorylase/phosphoribosyltransferase N-terminal domain"/>
    <property type="match status" value="1"/>
</dbReference>
<feature type="chain" id="PRO_0000154491" description="Anthranilate phosphoribosyltransferase">
    <location>
        <begin position="1"/>
        <end position="335"/>
    </location>
</feature>
<feature type="binding site" evidence="1">
    <location>
        <position position="79"/>
    </location>
    <ligand>
        <name>5-phospho-alpha-D-ribose 1-diphosphate</name>
        <dbReference type="ChEBI" id="CHEBI:58017"/>
    </ligand>
</feature>
<feature type="binding site" evidence="1">
    <location>
        <position position="79"/>
    </location>
    <ligand>
        <name>anthranilate</name>
        <dbReference type="ChEBI" id="CHEBI:16567"/>
        <label>1</label>
    </ligand>
</feature>
<feature type="binding site" evidence="1">
    <location>
        <begin position="82"/>
        <end position="83"/>
    </location>
    <ligand>
        <name>5-phospho-alpha-D-ribose 1-diphosphate</name>
        <dbReference type="ChEBI" id="CHEBI:58017"/>
    </ligand>
</feature>
<feature type="binding site" evidence="1">
    <location>
        <position position="87"/>
    </location>
    <ligand>
        <name>5-phospho-alpha-D-ribose 1-diphosphate</name>
        <dbReference type="ChEBI" id="CHEBI:58017"/>
    </ligand>
</feature>
<feature type="binding site" evidence="1">
    <location>
        <begin position="89"/>
        <end position="92"/>
    </location>
    <ligand>
        <name>5-phospho-alpha-D-ribose 1-diphosphate</name>
        <dbReference type="ChEBI" id="CHEBI:58017"/>
    </ligand>
</feature>
<feature type="binding site" evidence="1">
    <location>
        <position position="91"/>
    </location>
    <ligand>
        <name>Mg(2+)</name>
        <dbReference type="ChEBI" id="CHEBI:18420"/>
        <label>1</label>
    </ligand>
</feature>
<feature type="binding site" evidence="1">
    <location>
        <begin position="107"/>
        <end position="115"/>
    </location>
    <ligand>
        <name>5-phospho-alpha-D-ribose 1-diphosphate</name>
        <dbReference type="ChEBI" id="CHEBI:58017"/>
    </ligand>
</feature>
<feature type="binding site" evidence="1">
    <location>
        <position position="110"/>
    </location>
    <ligand>
        <name>anthranilate</name>
        <dbReference type="ChEBI" id="CHEBI:16567"/>
        <label>1</label>
    </ligand>
</feature>
<feature type="binding site" evidence="1">
    <location>
        <position position="119"/>
    </location>
    <ligand>
        <name>5-phospho-alpha-D-ribose 1-diphosphate</name>
        <dbReference type="ChEBI" id="CHEBI:58017"/>
    </ligand>
</feature>
<feature type="binding site" evidence="1">
    <location>
        <position position="165"/>
    </location>
    <ligand>
        <name>anthranilate</name>
        <dbReference type="ChEBI" id="CHEBI:16567"/>
        <label>2</label>
    </ligand>
</feature>
<feature type="binding site" evidence="1">
    <location>
        <position position="224"/>
    </location>
    <ligand>
        <name>Mg(2+)</name>
        <dbReference type="ChEBI" id="CHEBI:18420"/>
        <label>2</label>
    </ligand>
</feature>
<feature type="binding site" evidence="1">
    <location>
        <position position="225"/>
    </location>
    <ligand>
        <name>Mg(2+)</name>
        <dbReference type="ChEBI" id="CHEBI:18420"/>
        <label>1</label>
    </ligand>
</feature>
<feature type="binding site" evidence="1">
    <location>
        <position position="225"/>
    </location>
    <ligand>
        <name>Mg(2+)</name>
        <dbReference type="ChEBI" id="CHEBI:18420"/>
        <label>2</label>
    </ligand>
</feature>
<sequence>MKDIFEKLAAQENLTEAEITAVAEKIFKGELSEAQIAAFLMALKIKGETPEEILGLVKTIKKNAAVIPSQTSDAMDNCGTGGDKSFSFNISTTCSFVLAAGGIHIAKHGNRSISSKSGSADVLEELGINVVLAPEKLAQVLDETGIVFLFAQKMHPAMRYISPARQALGIPTVMNLIGPLTHPMDLETQLLGLYQADLQDDLAQVLKLLGRKRAVIITGPDNMDEAALYGKNHYTLLDNGQISQGSFTFEDFDMPKVTLEDIKGGDAKENAQILVSVLKNEPSPYLETTLLNAGLGFYANGKVDSIKEGIDLAREVIASGKAYAKLKALQEAQVD</sequence>
<accession>Q8DVF6</accession>
<keyword id="KW-0028">Amino-acid biosynthesis</keyword>
<keyword id="KW-0057">Aromatic amino acid biosynthesis</keyword>
<keyword id="KW-0328">Glycosyltransferase</keyword>
<keyword id="KW-0460">Magnesium</keyword>
<keyword id="KW-0479">Metal-binding</keyword>
<keyword id="KW-1185">Reference proteome</keyword>
<keyword id="KW-0808">Transferase</keyword>
<keyword id="KW-0822">Tryptophan biosynthesis</keyword>
<protein>
    <recommendedName>
        <fullName evidence="1">Anthranilate phosphoribosyltransferase</fullName>
        <ecNumber evidence="1">2.4.2.18</ecNumber>
    </recommendedName>
</protein>
<organism>
    <name type="scientific">Streptococcus mutans serotype c (strain ATCC 700610 / UA159)</name>
    <dbReference type="NCBI Taxonomy" id="210007"/>
    <lineage>
        <taxon>Bacteria</taxon>
        <taxon>Bacillati</taxon>
        <taxon>Bacillota</taxon>
        <taxon>Bacilli</taxon>
        <taxon>Lactobacillales</taxon>
        <taxon>Streptococcaceae</taxon>
        <taxon>Streptococcus</taxon>
    </lineage>
</organism>
<reference key="1">
    <citation type="journal article" date="2002" name="Proc. Natl. Acad. Sci. U.S.A.">
        <title>Genome sequence of Streptococcus mutans UA159, a cariogenic dental pathogen.</title>
        <authorList>
            <person name="Ajdic D.J."/>
            <person name="McShan W.M."/>
            <person name="McLaughlin R.E."/>
            <person name="Savic G."/>
            <person name="Chang J."/>
            <person name="Carson M.B."/>
            <person name="Primeaux C."/>
            <person name="Tian R."/>
            <person name="Kenton S."/>
            <person name="Jia H.G."/>
            <person name="Lin S.P."/>
            <person name="Qian Y."/>
            <person name="Li S."/>
            <person name="Zhu H."/>
            <person name="Najar F.Z."/>
            <person name="Lai H."/>
            <person name="White J."/>
            <person name="Roe B.A."/>
            <person name="Ferretti J.J."/>
        </authorList>
    </citation>
    <scope>NUCLEOTIDE SEQUENCE [LARGE SCALE GENOMIC DNA]</scope>
    <source>
        <strain>ATCC 700610 / UA159</strain>
    </source>
</reference>